<dbReference type="EMBL" id="CP001197">
    <property type="protein sequence ID" value="ACL09313.1"/>
    <property type="molecule type" value="Genomic_DNA"/>
</dbReference>
<dbReference type="PDB" id="3VQT">
    <property type="method" value="X-ray"/>
    <property type="resolution" value="1.80 A"/>
    <property type="chains" value="A/B/C/D=1-529"/>
</dbReference>
<dbReference type="PDB" id="3VR1">
    <property type="method" value="X-ray"/>
    <property type="resolution" value="3.00 A"/>
    <property type="chains" value="A/B/C/D=1-529"/>
</dbReference>
<dbReference type="PDBsum" id="3VQT"/>
<dbReference type="PDBsum" id="3VR1"/>
<dbReference type="SMR" id="B8DIL5"/>
<dbReference type="STRING" id="883.DvMF_2372"/>
<dbReference type="KEGG" id="dvm:DvMF_2372"/>
<dbReference type="eggNOG" id="COG4108">
    <property type="taxonomic scope" value="Bacteria"/>
</dbReference>
<dbReference type="HOGENOM" id="CLU_002794_2_1_7"/>
<dbReference type="OrthoDB" id="9801472at2"/>
<dbReference type="EvolutionaryTrace" id="B8DIL5"/>
<dbReference type="GO" id="GO:0005829">
    <property type="term" value="C:cytosol"/>
    <property type="evidence" value="ECO:0007669"/>
    <property type="project" value="TreeGrafter"/>
</dbReference>
<dbReference type="GO" id="GO:0005525">
    <property type="term" value="F:GTP binding"/>
    <property type="evidence" value="ECO:0007669"/>
    <property type="project" value="UniProtKB-UniRule"/>
</dbReference>
<dbReference type="GO" id="GO:0003924">
    <property type="term" value="F:GTPase activity"/>
    <property type="evidence" value="ECO:0007669"/>
    <property type="project" value="InterPro"/>
</dbReference>
<dbReference type="GO" id="GO:0016150">
    <property type="term" value="F:translation release factor activity, codon nonspecific"/>
    <property type="evidence" value="ECO:0007669"/>
    <property type="project" value="TreeGrafter"/>
</dbReference>
<dbReference type="GO" id="GO:0016149">
    <property type="term" value="F:translation release factor activity, codon specific"/>
    <property type="evidence" value="ECO:0007669"/>
    <property type="project" value="UniProtKB-UniRule"/>
</dbReference>
<dbReference type="GO" id="GO:0006449">
    <property type="term" value="P:regulation of translational termination"/>
    <property type="evidence" value="ECO:0007669"/>
    <property type="project" value="UniProtKB-UniRule"/>
</dbReference>
<dbReference type="CDD" id="cd04169">
    <property type="entry name" value="RF3"/>
    <property type="match status" value="1"/>
</dbReference>
<dbReference type="CDD" id="cd03689">
    <property type="entry name" value="RF3_II"/>
    <property type="match status" value="1"/>
</dbReference>
<dbReference type="CDD" id="cd16259">
    <property type="entry name" value="RF3_III"/>
    <property type="match status" value="1"/>
</dbReference>
<dbReference type="FunFam" id="3.30.70.3280:FF:000001">
    <property type="entry name" value="Peptide chain release factor 3"/>
    <property type="match status" value="1"/>
</dbReference>
<dbReference type="FunFam" id="3.40.50.300:FF:000542">
    <property type="entry name" value="Peptide chain release factor 3"/>
    <property type="match status" value="1"/>
</dbReference>
<dbReference type="Gene3D" id="3.40.50.300">
    <property type="entry name" value="P-loop containing nucleotide triphosphate hydrolases"/>
    <property type="match status" value="1"/>
</dbReference>
<dbReference type="Gene3D" id="3.30.70.3280">
    <property type="entry name" value="Peptide chain release factor 3, domain III"/>
    <property type="match status" value="1"/>
</dbReference>
<dbReference type="Gene3D" id="2.40.30.10">
    <property type="entry name" value="Translation factors"/>
    <property type="match status" value="1"/>
</dbReference>
<dbReference type="HAMAP" id="MF_00072">
    <property type="entry name" value="Rel_fac_3"/>
    <property type="match status" value="1"/>
</dbReference>
<dbReference type="InterPro" id="IPR053905">
    <property type="entry name" value="EF-G-like_DII"/>
</dbReference>
<dbReference type="InterPro" id="IPR035647">
    <property type="entry name" value="EFG_III/V"/>
</dbReference>
<dbReference type="InterPro" id="IPR031157">
    <property type="entry name" value="G_TR_CS"/>
</dbReference>
<dbReference type="InterPro" id="IPR027417">
    <property type="entry name" value="P-loop_NTPase"/>
</dbReference>
<dbReference type="InterPro" id="IPR004548">
    <property type="entry name" value="PrfC"/>
</dbReference>
<dbReference type="InterPro" id="IPR032090">
    <property type="entry name" value="RF3_C"/>
</dbReference>
<dbReference type="InterPro" id="IPR038467">
    <property type="entry name" value="RF3_dom_3_sf"/>
</dbReference>
<dbReference type="InterPro" id="IPR041732">
    <property type="entry name" value="RF3_GTP-bd"/>
</dbReference>
<dbReference type="InterPro" id="IPR005225">
    <property type="entry name" value="Small_GTP-bd"/>
</dbReference>
<dbReference type="InterPro" id="IPR000795">
    <property type="entry name" value="T_Tr_GTP-bd_dom"/>
</dbReference>
<dbReference type="InterPro" id="IPR009000">
    <property type="entry name" value="Transl_B-barrel_sf"/>
</dbReference>
<dbReference type="NCBIfam" id="TIGR00503">
    <property type="entry name" value="prfC"/>
    <property type="match status" value="1"/>
</dbReference>
<dbReference type="NCBIfam" id="NF001964">
    <property type="entry name" value="PRK00741.1"/>
    <property type="match status" value="1"/>
</dbReference>
<dbReference type="NCBIfam" id="TIGR00231">
    <property type="entry name" value="small_GTP"/>
    <property type="match status" value="1"/>
</dbReference>
<dbReference type="PANTHER" id="PTHR43556">
    <property type="entry name" value="PEPTIDE CHAIN RELEASE FACTOR RF3"/>
    <property type="match status" value="1"/>
</dbReference>
<dbReference type="PANTHER" id="PTHR43556:SF2">
    <property type="entry name" value="PEPTIDE CHAIN RELEASE FACTOR RF3"/>
    <property type="match status" value="1"/>
</dbReference>
<dbReference type="Pfam" id="PF22042">
    <property type="entry name" value="EF-G_D2"/>
    <property type="match status" value="1"/>
</dbReference>
<dbReference type="Pfam" id="PF00009">
    <property type="entry name" value="GTP_EFTU"/>
    <property type="match status" value="1"/>
</dbReference>
<dbReference type="Pfam" id="PF16658">
    <property type="entry name" value="RF3_C"/>
    <property type="match status" value="1"/>
</dbReference>
<dbReference type="PRINTS" id="PR00315">
    <property type="entry name" value="ELONGATNFCT"/>
</dbReference>
<dbReference type="SUPFAM" id="SSF54980">
    <property type="entry name" value="EF-G C-terminal domain-like"/>
    <property type="match status" value="1"/>
</dbReference>
<dbReference type="SUPFAM" id="SSF52540">
    <property type="entry name" value="P-loop containing nucleoside triphosphate hydrolases"/>
    <property type="match status" value="1"/>
</dbReference>
<dbReference type="SUPFAM" id="SSF50447">
    <property type="entry name" value="Translation proteins"/>
    <property type="match status" value="1"/>
</dbReference>
<dbReference type="PROSITE" id="PS00301">
    <property type="entry name" value="G_TR_1"/>
    <property type="match status" value="1"/>
</dbReference>
<dbReference type="PROSITE" id="PS51722">
    <property type="entry name" value="G_TR_2"/>
    <property type="match status" value="1"/>
</dbReference>
<gene>
    <name evidence="1" type="primary">prfC</name>
    <name type="ordered locus">DvMF_2372</name>
</gene>
<evidence type="ECO:0000255" key="1">
    <source>
        <dbReference type="HAMAP-Rule" id="MF_00072"/>
    </source>
</evidence>
<evidence type="ECO:0007829" key="2">
    <source>
        <dbReference type="PDB" id="3VQT"/>
    </source>
</evidence>
<evidence type="ECO:0007829" key="3">
    <source>
        <dbReference type="PDB" id="3VR1"/>
    </source>
</evidence>
<reference key="1">
    <citation type="submission" date="2008-10" db="EMBL/GenBank/DDBJ databases">
        <title>Complete sequence of Desulfovibrio vulgaris str. 'Miyazaki F'.</title>
        <authorList>
            <person name="Lucas S."/>
            <person name="Copeland A."/>
            <person name="Lapidus A."/>
            <person name="Glavina del Rio T."/>
            <person name="Dalin E."/>
            <person name="Tice H."/>
            <person name="Bruce D."/>
            <person name="Goodwin L."/>
            <person name="Pitluck S."/>
            <person name="Sims D."/>
            <person name="Brettin T."/>
            <person name="Detter J.C."/>
            <person name="Han C."/>
            <person name="Larimer F."/>
            <person name="Land M."/>
            <person name="Hauser L."/>
            <person name="Kyrpides N."/>
            <person name="Mikhailova N."/>
            <person name="Hazen T.C."/>
            <person name="Richardson P."/>
        </authorList>
    </citation>
    <scope>NUCLEOTIDE SEQUENCE [LARGE SCALE GENOMIC DNA]</scope>
    <source>
        <strain>DSM 19637 / Miyazaki F</strain>
    </source>
</reference>
<organism>
    <name type="scientific">Nitratidesulfovibrio vulgaris (strain DSM 19637 / Miyazaki F)</name>
    <name type="common">Desulfovibrio vulgaris</name>
    <dbReference type="NCBI Taxonomy" id="883"/>
    <lineage>
        <taxon>Bacteria</taxon>
        <taxon>Pseudomonadati</taxon>
        <taxon>Thermodesulfobacteriota</taxon>
        <taxon>Desulfovibrionia</taxon>
        <taxon>Desulfovibrionales</taxon>
        <taxon>Desulfovibrionaceae</taxon>
        <taxon>Nitratidesulfovibrio</taxon>
    </lineage>
</organism>
<name>RF3_NITV9</name>
<comment type="function">
    <text evidence="1">Increases the formation of ribosomal termination complexes and stimulates activities of RF-1 and RF-2. It binds guanine nucleotides and has strong preference for UGA stop codons. It may interact directly with the ribosome. The stimulation of RF-1 and RF-2 is significantly reduced by GTP and GDP, but not by GMP.</text>
</comment>
<comment type="subcellular location">
    <subcellularLocation>
        <location evidence="1">Cytoplasm</location>
    </subcellularLocation>
</comment>
<comment type="similarity">
    <text evidence="1">Belongs to the TRAFAC class translation factor GTPase superfamily. Classic translation factor GTPase family. PrfC subfamily.</text>
</comment>
<sequence length="529" mass="59251">MSSRLEREAARRRTFAIISHPDAGKTTLTEKLLLFGGAIQMAGSVKARKAARHATSDWMAMERERGISVTTSVMQFPYRDRVVNLLDTPGHQDFSEDTYRVLTAVDSALVVIDAAKGVEAQTRKLMDVCRMRATPVMTFVNKMDREALHPLDVMADIEQHLQIECAPMTWPIGMGSSFKGTYDLLHKQLHLFSATHGGRIQSGIVIHGADDPQLDEYLGDQAEQLRMDLALLEEAGTPFDEERYLKGELTPVFFGSAINNFGVREMLDMFVEFAPGPQPRPAATRVVEPGEEAFTGVVFKIQANMDKAHRDRMAFLRICSGTFTRGMRLKHHRTGKDVTVANATIFMAQDRTGVEEAFPGDIIGIPNHGTIKIGDTFTESKEVLKFVGIPNFAPEHFRRVRLKNPLKAKQLQKGLEQLAEEGAVQLFRPLVNNDYILGAVGVLQFDVIVARLADEYGVDAVYEGVSTHTARWVYCEDKKIFADFQDYHRGELAVDAEGALAYLAPNPWRLESAMERYPKVEFRTTREIS</sequence>
<keyword id="KW-0002">3D-structure</keyword>
<keyword id="KW-0963">Cytoplasm</keyword>
<keyword id="KW-0342">GTP-binding</keyword>
<keyword id="KW-0547">Nucleotide-binding</keyword>
<keyword id="KW-0648">Protein biosynthesis</keyword>
<proteinExistence type="evidence at protein level"/>
<protein>
    <recommendedName>
        <fullName evidence="1">Peptide chain release factor 3</fullName>
        <shortName evidence="1">RF-3</shortName>
    </recommendedName>
</protein>
<feature type="chain" id="PRO_1000193520" description="Peptide chain release factor 3">
    <location>
        <begin position="1"/>
        <end position="529"/>
    </location>
</feature>
<feature type="domain" description="tr-type G">
    <location>
        <begin position="10"/>
        <end position="278"/>
    </location>
</feature>
<feature type="binding site" evidence="1">
    <location>
        <begin position="19"/>
        <end position="26"/>
    </location>
    <ligand>
        <name>GTP</name>
        <dbReference type="ChEBI" id="CHEBI:37565"/>
    </ligand>
</feature>
<feature type="binding site" evidence="1">
    <location>
        <begin position="87"/>
        <end position="91"/>
    </location>
    <ligand>
        <name>GTP</name>
        <dbReference type="ChEBI" id="CHEBI:37565"/>
    </ligand>
</feature>
<feature type="binding site" evidence="1">
    <location>
        <begin position="141"/>
        <end position="144"/>
    </location>
    <ligand>
        <name>GTP</name>
        <dbReference type="ChEBI" id="CHEBI:37565"/>
    </ligand>
</feature>
<feature type="helix" evidence="2">
    <location>
        <begin position="4"/>
        <end position="10"/>
    </location>
</feature>
<feature type="strand" evidence="2">
    <location>
        <begin position="12"/>
        <end position="18"/>
    </location>
</feature>
<feature type="helix" evidence="2">
    <location>
        <begin position="25"/>
        <end position="35"/>
    </location>
</feature>
<feature type="helix" evidence="2">
    <location>
        <begin position="39"/>
        <end position="47"/>
    </location>
</feature>
<feature type="helix" evidence="3">
    <location>
        <begin position="56"/>
        <end position="62"/>
    </location>
</feature>
<feature type="turn" evidence="2">
    <location>
        <begin position="70"/>
        <end position="72"/>
    </location>
</feature>
<feature type="strand" evidence="2">
    <location>
        <begin position="73"/>
        <end position="78"/>
    </location>
</feature>
<feature type="strand" evidence="2">
    <location>
        <begin position="81"/>
        <end position="86"/>
    </location>
</feature>
<feature type="helix" evidence="2">
    <location>
        <begin position="91"/>
        <end position="93"/>
    </location>
</feature>
<feature type="helix" evidence="2">
    <location>
        <begin position="96"/>
        <end position="103"/>
    </location>
</feature>
<feature type="strand" evidence="2">
    <location>
        <begin position="106"/>
        <end position="113"/>
    </location>
</feature>
<feature type="turn" evidence="2">
    <location>
        <begin position="114"/>
        <end position="116"/>
    </location>
</feature>
<feature type="helix" evidence="2">
    <location>
        <begin position="120"/>
        <end position="131"/>
    </location>
</feature>
<feature type="strand" evidence="2">
    <location>
        <begin position="136"/>
        <end position="141"/>
    </location>
</feature>
<feature type="helix" evidence="2">
    <location>
        <begin position="150"/>
        <end position="161"/>
    </location>
</feature>
<feature type="strand" evidence="2">
    <location>
        <begin position="163"/>
        <end position="173"/>
    </location>
</feature>
<feature type="helix" evidence="2">
    <location>
        <begin position="175"/>
        <end position="177"/>
    </location>
</feature>
<feature type="strand" evidence="2">
    <location>
        <begin position="180"/>
        <end position="183"/>
    </location>
</feature>
<feature type="turn" evidence="2">
    <location>
        <begin position="184"/>
        <end position="187"/>
    </location>
</feature>
<feature type="strand" evidence="2">
    <location>
        <begin position="188"/>
        <end position="191"/>
    </location>
</feature>
<feature type="helix" evidence="2">
    <location>
        <begin position="213"/>
        <end position="218"/>
    </location>
</feature>
<feature type="helix" evidence="2">
    <location>
        <begin position="219"/>
        <end position="221"/>
    </location>
</feature>
<feature type="helix" evidence="2">
    <location>
        <begin position="222"/>
        <end position="235"/>
    </location>
</feature>
<feature type="helix" evidence="2">
    <location>
        <begin position="241"/>
        <end position="245"/>
    </location>
</feature>
<feature type="strand" evidence="2">
    <location>
        <begin position="248"/>
        <end position="254"/>
    </location>
</feature>
<feature type="helix" evidence="2">
    <location>
        <begin position="257"/>
        <end position="259"/>
    </location>
</feature>
<feature type="helix" evidence="2">
    <location>
        <begin position="263"/>
        <end position="273"/>
    </location>
</feature>
<feature type="strand" evidence="2">
    <location>
        <begin position="280"/>
        <end position="287"/>
    </location>
</feature>
<feature type="strand" evidence="2">
    <location>
        <begin position="295"/>
        <end position="302"/>
    </location>
</feature>
<feature type="strand" evidence="2">
    <location>
        <begin position="313"/>
        <end position="321"/>
    </location>
</feature>
<feature type="strand" evidence="2">
    <location>
        <begin position="328"/>
        <end position="331"/>
    </location>
</feature>
<feature type="turn" evidence="2">
    <location>
        <begin position="332"/>
        <end position="335"/>
    </location>
</feature>
<feature type="strand" evidence="2">
    <location>
        <begin position="336"/>
        <end position="339"/>
    </location>
</feature>
<feature type="strand" evidence="2">
    <location>
        <begin position="362"/>
        <end position="366"/>
    </location>
</feature>
<feature type="strand" evidence="2">
    <location>
        <begin position="376"/>
        <end position="382"/>
    </location>
</feature>
<feature type="strand" evidence="2">
    <location>
        <begin position="390"/>
        <end position="392"/>
    </location>
</feature>
<feature type="strand" evidence="2">
    <location>
        <begin position="395"/>
        <end position="403"/>
    </location>
</feature>
<feature type="helix" evidence="2">
    <location>
        <begin position="405"/>
        <end position="407"/>
    </location>
</feature>
<feature type="helix" evidence="2">
    <location>
        <begin position="408"/>
        <end position="420"/>
    </location>
</feature>
<feature type="strand" evidence="2">
    <location>
        <begin position="423"/>
        <end position="432"/>
    </location>
</feature>
<feature type="strand" evidence="2">
    <location>
        <begin position="436"/>
        <end position="441"/>
    </location>
</feature>
<feature type="helix" evidence="2">
    <location>
        <begin position="443"/>
        <end position="456"/>
    </location>
</feature>
<feature type="strand" evidence="2">
    <location>
        <begin position="460"/>
        <end position="464"/>
    </location>
</feature>
<feature type="strand" evidence="2">
    <location>
        <begin position="469"/>
        <end position="474"/>
    </location>
</feature>
<feature type="helix" evidence="2">
    <location>
        <begin position="478"/>
        <end position="487"/>
    </location>
</feature>
<feature type="helix" evidence="2">
    <location>
        <begin position="489"/>
        <end position="491"/>
    </location>
</feature>
<feature type="strand" evidence="2">
    <location>
        <begin position="492"/>
        <end position="495"/>
    </location>
</feature>
<feature type="strand" evidence="2">
    <location>
        <begin position="500"/>
        <end position="506"/>
    </location>
</feature>
<feature type="helix" evidence="2">
    <location>
        <begin position="507"/>
        <end position="516"/>
    </location>
</feature>
<feature type="strand" evidence="2">
    <location>
        <begin position="520"/>
        <end position="527"/>
    </location>
</feature>
<accession>B8DIL5</accession>